<proteinExistence type="evidence at protein level"/>
<evidence type="ECO:0000255" key="1"/>
<evidence type="ECO:0000305" key="2"/>
<sequence length="134" mass="15147">MADTHHAQGPGKSVLGIGQRIVSIMVEMVETRLRLAVVELEEEKANLFQLLLMLGLTMLFAAFGLMSLMVLIIWAVDPQYRLNAMIATTVVLLLLALIGGIWTLRKSRKSTLLRHTRHELANDRQLLEEESREQ</sequence>
<reference key="1">
    <citation type="journal article" date="1997" name="Science">
        <title>The complete genome sequence of Escherichia coli K-12.</title>
        <authorList>
            <person name="Blattner F.R."/>
            <person name="Plunkett G. III"/>
            <person name="Bloch C.A."/>
            <person name="Perna N.T."/>
            <person name="Burland V."/>
            <person name="Riley M."/>
            <person name="Collado-Vides J."/>
            <person name="Glasner J.D."/>
            <person name="Rode C.K."/>
            <person name="Mayhew G.F."/>
            <person name="Gregor J."/>
            <person name="Davis N.W."/>
            <person name="Kirkpatrick H.A."/>
            <person name="Goeden M.A."/>
            <person name="Rose D.J."/>
            <person name="Mau B."/>
            <person name="Shao Y."/>
        </authorList>
    </citation>
    <scope>NUCLEOTIDE SEQUENCE [LARGE SCALE GENOMIC DNA]</scope>
    <source>
        <strain>K12 / MG1655 / ATCC 47076</strain>
    </source>
</reference>
<reference key="2">
    <citation type="journal article" date="2006" name="Mol. Syst. Biol.">
        <title>Highly accurate genome sequences of Escherichia coli K-12 strains MG1655 and W3110.</title>
        <authorList>
            <person name="Hayashi K."/>
            <person name="Morooka N."/>
            <person name="Yamamoto Y."/>
            <person name="Fujita K."/>
            <person name="Isono K."/>
            <person name="Choi S."/>
            <person name="Ohtsubo E."/>
            <person name="Baba T."/>
            <person name="Wanner B.L."/>
            <person name="Mori H."/>
            <person name="Horiuchi T."/>
        </authorList>
    </citation>
    <scope>NUCLEOTIDE SEQUENCE [LARGE SCALE GENOMIC DNA]</scope>
    <source>
        <strain>K12 / W3110 / ATCC 27325 / DSM 5911</strain>
    </source>
</reference>
<reference key="3">
    <citation type="journal article" date="2005" name="Science">
        <title>Global topology analysis of the Escherichia coli inner membrane proteome.</title>
        <authorList>
            <person name="Daley D.O."/>
            <person name="Rapp M."/>
            <person name="Granseth E."/>
            <person name="Melen K."/>
            <person name="Drew D."/>
            <person name="von Heijne G."/>
        </authorList>
    </citation>
    <scope>TOPOLOGY [LARGE SCALE ANALYSIS]</scope>
    <source>
        <strain>K12 / MG1655 / ATCC 47076</strain>
    </source>
</reference>
<protein>
    <recommendedName>
        <fullName>Inner membrane protein YqjE</fullName>
    </recommendedName>
</protein>
<gene>
    <name type="primary">yqjE</name>
    <name type="ordered locus">b3099</name>
    <name type="ordered locus">JW3070</name>
</gene>
<accession>P64585</accession>
<accession>P42618</accession>
<accession>Q2M9A7</accession>
<dbReference type="EMBL" id="U18997">
    <property type="protein sequence ID" value="AAA57903.1"/>
    <property type="status" value="ALT_INIT"/>
    <property type="molecule type" value="Genomic_DNA"/>
</dbReference>
<dbReference type="EMBL" id="U00096">
    <property type="protein sequence ID" value="AAC76134.1"/>
    <property type="molecule type" value="Genomic_DNA"/>
</dbReference>
<dbReference type="EMBL" id="AP009048">
    <property type="protein sequence ID" value="BAE77149.1"/>
    <property type="molecule type" value="Genomic_DNA"/>
</dbReference>
<dbReference type="PIR" id="H65098">
    <property type="entry name" value="H65098"/>
</dbReference>
<dbReference type="RefSeq" id="NP_417570.1">
    <property type="nucleotide sequence ID" value="NC_000913.3"/>
</dbReference>
<dbReference type="RefSeq" id="WP_000785722.1">
    <property type="nucleotide sequence ID" value="NZ_STEB01000001.1"/>
</dbReference>
<dbReference type="SMR" id="P64585"/>
<dbReference type="BioGRID" id="4262412">
    <property type="interactions" value="15"/>
</dbReference>
<dbReference type="FunCoup" id="P64585">
    <property type="interactions" value="40"/>
</dbReference>
<dbReference type="IntAct" id="P64585">
    <property type="interactions" value="1"/>
</dbReference>
<dbReference type="STRING" id="511145.b3099"/>
<dbReference type="TCDB" id="1.E.34.2.1">
    <property type="family name" value="the putative actinobacterial holin-x (hol-x) family"/>
</dbReference>
<dbReference type="jPOST" id="P64585"/>
<dbReference type="PaxDb" id="511145-b3099"/>
<dbReference type="EnsemblBacteria" id="AAC76134">
    <property type="protein sequence ID" value="AAC76134"/>
    <property type="gene ID" value="b3099"/>
</dbReference>
<dbReference type="GeneID" id="947611"/>
<dbReference type="KEGG" id="ecj:JW3070"/>
<dbReference type="KEGG" id="eco:b3099"/>
<dbReference type="KEGG" id="ecoc:C3026_16920"/>
<dbReference type="PATRIC" id="fig|511145.12.peg.3195"/>
<dbReference type="EchoBASE" id="EB2600"/>
<dbReference type="eggNOG" id="COG5393">
    <property type="taxonomic scope" value="Bacteria"/>
</dbReference>
<dbReference type="HOGENOM" id="CLU_136851_0_0_6"/>
<dbReference type="InParanoid" id="P64585"/>
<dbReference type="OMA" id="FWAIDPA"/>
<dbReference type="OrthoDB" id="6505013at2"/>
<dbReference type="PhylomeDB" id="P64585"/>
<dbReference type="BioCyc" id="EcoCyc:G7613-MONOMER"/>
<dbReference type="PRO" id="PR:P64585"/>
<dbReference type="Proteomes" id="UP000000625">
    <property type="component" value="Chromosome"/>
</dbReference>
<dbReference type="GO" id="GO:0005886">
    <property type="term" value="C:plasma membrane"/>
    <property type="evidence" value="ECO:0000314"/>
    <property type="project" value="EcoCyc"/>
</dbReference>
<dbReference type="InterPro" id="IPR009937">
    <property type="entry name" value="Phage_holin_3_6"/>
</dbReference>
<dbReference type="Pfam" id="PF07332">
    <property type="entry name" value="Phage_holin_3_6"/>
    <property type="match status" value="1"/>
</dbReference>
<feature type="chain" id="PRO_0000169432" description="Inner membrane protein YqjE">
    <location>
        <begin position="1"/>
        <end position="134"/>
    </location>
</feature>
<feature type="topological domain" description="Cytoplasmic" evidence="1">
    <location>
        <begin position="1"/>
        <end position="55"/>
    </location>
</feature>
<feature type="transmembrane region" description="Helical" evidence="1">
    <location>
        <begin position="56"/>
        <end position="76"/>
    </location>
</feature>
<feature type="topological domain" description="Periplasmic" evidence="1">
    <location>
        <begin position="77"/>
        <end position="83"/>
    </location>
</feature>
<feature type="transmembrane region" description="Helical" evidence="1">
    <location>
        <begin position="84"/>
        <end position="104"/>
    </location>
</feature>
<feature type="topological domain" description="Cytoplasmic" evidence="1">
    <location>
        <begin position="105"/>
        <end position="134"/>
    </location>
</feature>
<organism>
    <name type="scientific">Escherichia coli (strain K12)</name>
    <dbReference type="NCBI Taxonomy" id="83333"/>
    <lineage>
        <taxon>Bacteria</taxon>
        <taxon>Pseudomonadati</taxon>
        <taxon>Pseudomonadota</taxon>
        <taxon>Gammaproteobacteria</taxon>
        <taxon>Enterobacterales</taxon>
        <taxon>Enterobacteriaceae</taxon>
        <taxon>Escherichia</taxon>
    </lineage>
</organism>
<keyword id="KW-0997">Cell inner membrane</keyword>
<keyword id="KW-1003">Cell membrane</keyword>
<keyword id="KW-0472">Membrane</keyword>
<keyword id="KW-1185">Reference proteome</keyword>
<keyword id="KW-0812">Transmembrane</keyword>
<keyword id="KW-1133">Transmembrane helix</keyword>
<name>YQJE_ECOLI</name>
<comment type="subcellular location">
    <subcellularLocation>
        <location>Cell inner membrane</location>
        <topology>Multi-pass membrane protein</topology>
    </subcellularLocation>
</comment>
<comment type="sequence caution" evidence="2">
    <conflict type="erroneous initiation">
        <sequence resource="EMBL-CDS" id="AAA57903"/>
    </conflict>
</comment>